<gene>
    <name evidence="1" type="primary">rnhB</name>
    <name type="ordered locus">Strop_1312</name>
</gene>
<proteinExistence type="inferred from homology"/>
<sequence>MLTPPRTVVRRDGGLYALERALQRRGFRQVAGADEAGRGACAGPLVAAAAILPPGRRGEVDGLADSKLLTPASRERVYAEVIARASAYAVVVIPAAEVDLRGLHVCNLAAMRRALASLATPPEYVLTDGFGVDGLDVPGLAVWKGDRVAACVAAASVLAKVTRDRIMVELDLEFPGYGFAEHKGYITAEHSAALRERGPCPEHRFSYVNVATVSGRQGAPPRARRPLVAEADEAMERAGVVKGTVGVALGERPWAGASVGNDVAMEGGMG</sequence>
<evidence type="ECO:0000255" key="1">
    <source>
        <dbReference type="HAMAP-Rule" id="MF_00052"/>
    </source>
</evidence>
<evidence type="ECO:0000255" key="2">
    <source>
        <dbReference type="PROSITE-ProRule" id="PRU01319"/>
    </source>
</evidence>
<name>RNH2_SALTO</name>
<accession>A4X4I2</accession>
<feature type="chain" id="PRO_0000334953" description="Ribonuclease HII">
    <location>
        <begin position="1"/>
        <end position="270"/>
    </location>
</feature>
<feature type="domain" description="RNase H type-2" evidence="2">
    <location>
        <begin position="28"/>
        <end position="222"/>
    </location>
</feature>
<feature type="binding site" evidence="1">
    <location>
        <position position="34"/>
    </location>
    <ligand>
        <name>a divalent metal cation</name>
        <dbReference type="ChEBI" id="CHEBI:60240"/>
    </ligand>
</feature>
<feature type="binding site" evidence="1">
    <location>
        <position position="35"/>
    </location>
    <ligand>
        <name>a divalent metal cation</name>
        <dbReference type="ChEBI" id="CHEBI:60240"/>
    </ligand>
</feature>
<feature type="binding site" evidence="1">
    <location>
        <position position="128"/>
    </location>
    <ligand>
        <name>a divalent metal cation</name>
        <dbReference type="ChEBI" id="CHEBI:60240"/>
    </ligand>
</feature>
<reference key="1">
    <citation type="journal article" date="2007" name="Proc. Natl. Acad. Sci. U.S.A.">
        <title>Genome sequencing reveals complex secondary metabolome in the marine actinomycete Salinispora tropica.</title>
        <authorList>
            <person name="Udwary D.W."/>
            <person name="Zeigler L."/>
            <person name="Asolkar R.N."/>
            <person name="Singan V."/>
            <person name="Lapidus A."/>
            <person name="Fenical W."/>
            <person name="Jensen P.R."/>
            <person name="Moore B.S."/>
        </authorList>
    </citation>
    <scope>NUCLEOTIDE SEQUENCE [LARGE SCALE GENOMIC DNA]</scope>
    <source>
        <strain>ATCC BAA-916 / DSM 44818 / JCM 13857 / NBRC 105044 / CNB-440</strain>
    </source>
</reference>
<protein>
    <recommendedName>
        <fullName evidence="1">Ribonuclease HII</fullName>
        <shortName evidence="1">RNase HII</shortName>
        <ecNumber evidence="1">3.1.26.4</ecNumber>
    </recommendedName>
</protein>
<dbReference type="EC" id="3.1.26.4" evidence="1"/>
<dbReference type="EMBL" id="CP000667">
    <property type="protein sequence ID" value="ABP53782.1"/>
    <property type="molecule type" value="Genomic_DNA"/>
</dbReference>
<dbReference type="RefSeq" id="WP_011905214.1">
    <property type="nucleotide sequence ID" value="NC_009380.1"/>
</dbReference>
<dbReference type="SMR" id="A4X4I2"/>
<dbReference type="STRING" id="369723.Strop_1312"/>
<dbReference type="KEGG" id="stp:Strop_1312"/>
<dbReference type="PATRIC" id="fig|369723.5.peg.1337"/>
<dbReference type="eggNOG" id="COG0164">
    <property type="taxonomic scope" value="Bacteria"/>
</dbReference>
<dbReference type="HOGENOM" id="CLU_036532_1_0_11"/>
<dbReference type="Proteomes" id="UP000000235">
    <property type="component" value="Chromosome"/>
</dbReference>
<dbReference type="GO" id="GO:0005737">
    <property type="term" value="C:cytoplasm"/>
    <property type="evidence" value="ECO:0007669"/>
    <property type="project" value="UniProtKB-SubCell"/>
</dbReference>
<dbReference type="GO" id="GO:0032299">
    <property type="term" value="C:ribonuclease H2 complex"/>
    <property type="evidence" value="ECO:0007669"/>
    <property type="project" value="TreeGrafter"/>
</dbReference>
<dbReference type="GO" id="GO:0030145">
    <property type="term" value="F:manganese ion binding"/>
    <property type="evidence" value="ECO:0007669"/>
    <property type="project" value="UniProtKB-UniRule"/>
</dbReference>
<dbReference type="GO" id="GO:0003723">
    <property type="term" value="F:RNA binding"/>
    <property type="evidence" value="ECO:0007669"/>
    <property type="project" value="InterPro"/>
</dbReference>
<dbReference type="GO" id="GO:0004523">
    <property type="term" value="F:RNA-DNA hybrid ribonuclease activity"/>
    <property type="evidence" value="ECO:0007669"/>
    <property type="project" value="UniProtKB-UniRule"/>
</dbReference>
<dbReference type="GO" id="GO:0043137">
    <property type="term" value="P:DNA replication, removal of RNA primer"/>
    <property type="evidence" value="ECO:0007669"/>
    <property type="project" value="TreeGrafter"/>
</dbReference>
<dbReference type="GO" id="GO:0006298">
    <property type="term" value="P:mismatch repair"/>
    <property type="evidence" value="ECO:0007669"/>
    <property type="project" value="TreeGrafter"/>
</dbReference>
<dbReference type="CDD" id="cd07182">
    <property type="entry name" value="RNase_HII_bacteria_HII_like"/>
    <property type="match status" value="1"/>
</dbReference>
<dbReference type="Gene3D" id="3.30.420.10">
    <property type="entry name" value="Ribonuclease H-like superfamily/Ribonuclease H"/>
    <property type="match status" value="1"/>
</dbReference>
<dbReference type="HAMAP" id="MF_00052_B">
    <property type="entry name" value="RNase_HII_B"/>
    <property type="match status" value="1"/>
</dbReference>
<dbReference type="InterPro" id="IPR022898">
    <property type="entry name" value="RNase_HII"/>
</dbReference>
<dbReference type="InterPro" id="IPR001352">
    <property type="entry name" value="RNase_HII/HIII"/>
</dbReference>
<dbReference type="InterPro" id="IPR024567">
    <property type="entry name" value="RNase_HII/HIII_dom"/>
</dbReference>
<dbReference type="InterPro" id="IPR012337">
    <property type="entry name" value="RNaseH-like_sf"/>
</dbReference>
<dbReference type="InterPro" id="IPR036397">
    <property type="entry name" value="RNaseH_sf"/>
</dbReference>
<dbReference type="NCBIfam" id="NF000595">
    <property type="entry name" value="PRK00015.1-3"/>
    <property type="match status" value="1"/>
</dbReference>
<dbReference type="NCBIfam" id="NF000598">
    <property type="entry name" value="PRK00015.2-2"/>
    <property type="match status" value="1"/>
</dbReference>
<dbReference type="PANTHER" id="PTHR10954">
    <property type="entry name" value="RIBONUCLEASE H2 SUBUNIT A"/>
    <property type="match status" value="1"/>
</dbReference>
<dbReference type="PANTHER" id="PTHR10954:SF18">
    <property type="entry name" value="RIBONUCLEASE HII"/>
    <property type="match status" value="1"/>
</dbReference>
<dbReference type="Pfam" id="PF01351">
    <property type="entry name" value="RNase_HII"/>
    <property type="match status" value="1"/>
</dbReference>
<dbReference type="SUPFAM" id="SSF53098">
    <property type="entry name" value="Ribonuclease H-like"/>
    <property type="match status" value="1"/>
</dbReference>
<dbReference type="PROSITE" id="PS51975">
    <property type="entry name" value="RNASE_H_2"/>
    <property type="match status" value="1"/>
</dbReference>
<keyword id="KW-0963">Cytoplasm</keyword>
<keyword id="KW-0255">Endonuclease</keyword>
<keyword id="KW-0378">Hydrolase</keyword>
<keyword id="KW-0464">Manganese</keyword>
<keyword id="KW-0479">Metal-binding</keyword>
<keyword id="KW-0540">Nuclease</keyword>
<keyword id="KW-1185">Reference proteome</keyword>
<organism>
    <name type="scientific">Salinispora tropica (strain ATCC BAA-916 / DSM 44818 / JCM 13857 / NBRC 105044 / CNB-440)</name>
    <dbReference type="NCBI Taxonomy" id="369723"/>
    <lineage>
        <taxon>Bacteria</taxon>
        <taxon>Bacillati</taxon>
        <taxon>Actinomycetota</taxon>
        <taxon>Actinomycetes</taxon>
        <taxon>Micromonosporales</taxon>
        <taxon>Micromonosporaceae</taxon>
        <taxon>Salinispora</taxon>
    </lineage>
</organism>
<comment type="function">
    <text evidence="1">Endonuclease that specifically degrades the RNA of RNA-DNA hybrids.</text>
</comment>
<comment type="catalytic activity">
    <reaction evidence="1">
        <text>Endonucleolytic cleavage to 5'-phosphomonoester.</text>
        <dbReference type="EC" id="3.1.26.4"/>
    </reaction>
</comment>
<comment type="cofactor">
    <cofactor evidence="1">
        <name>Mn(2+)</name>
        <dbReference type="ChEBI" id="CHEBI:29035"/>
    </cofactor>
    <cofactor evidence="1">
        <name>Mg(2+)</name>
        <dbReference type="ChEBI" id="CHEBI:18420"/>
    </cofactor>
    <text evidence="1">Manganese or magnesium. Binds 1 divalent metal ion per monomer in the absence of substrate. May bind a second metal ion after substrate binding.</text>
</comment>
<comment type="subcellular location">
    <subcellularLocation>
        <location evidence="1">Cytoplasm</location>
    </subcellularLocation>
</comment>
<comment type="similarity">
    <text evidence="1">Belongs to the RNase HII family.</text>
</comment>